<reference key="1">
    <citation type="submission" date="2006-10" db="EMBL/GenBank/DDBJ databases">
        <authorList>
            <consortium name="Sanger Xenopus tropicalis EST/cDNA project"/>
        </authorList>
    </citation>
    <scope>NUCLEOTIDE SEQUENCE [LARGE SCALE MRNA]</scope>
    <source>
        <tissue>Egg</tissue>
    </source>
</reference>
<feature type="propeptide" id="PRO_0000442527" description="UBL" evidence="2">
    <location>
        <begin position="1"/>
        <end position="71"/>
    </location>
</feature>
<feature type="chain" id="PRO_0000286090" description="Splicing regulator SDE2">
    <location>
        <begin position="72"/>
        <end position="468"/>
    </location>
</feature>
<feature type="domain" description="SAP" evidence="3">
    <location>
        <begin position="413"/>
        <end position="447"/>
    </location>
</feature>
<feature type="region of interest" description="Disordered" evidence="4">
    <location>
        <begin position="169"/>
        <end position="197"/>
    </location>
</feature>
<feature type="region of interest" description="Disordered" evidence="4">
    <location>
        <begin position="212"/>
        <end position="397"/>
    </location>
</feature>
<feature type="coiled-coil region" evidence="3">
    <location>
        <begin position="112"/>
        <end position="143"/>
    </location>
</feature>
<feature type="short sequence motif" description="PIP-box" evidence="2">
    <location>
        <begin position="33"/>
        <end position="46"/>
    </location>
</feature>
<feature type="compositionally biased region" description="Low complexity" evidence="4">
    <location>
        <begin position="228"/>
        <end position="239"/>
    </location>
</feature>
<feature type="compositionally biased region" description="Basic and acidic residues" evidence="4">
    <location>
        <begin position="240"/>
        <end position="250"/>
    </location>
</feature>
<feature type="compositionally biased region" description="Low complexity" evidence="4">
    <location>
        <begin position="251"/>
        <end position="266"/>
    </location>
</feature>
<feature type="compositionally biased region" description="Low complexity" evidence="4">
    <location>
        <begin position="303"/>
        <end position="314"/>
    </location>
</feature>
<feature type="compositionally biased region" description="Low complexity" evidence="4">
    <location>
        <begin position="329"/>
        <end position="340"/>
    </location>
</feature>
<feature type="compositionally biased region" description="Polar residues" evidence="4">
    <location>
        <begin position="345"/>
        <end position="374"/>
    </location>
</feature>
<feature type="compositionally biased region" description="Polar residues" evidence="4">
    <location>
        <begin position="384"/>
        <end position="397"/>
    </location>
</feature>
<feature type="site" description="Cleavage" evidence="2">
    <location>
        <begin position="71"/>
        <end position="72"/>
    </location>
</feature>
<gene>
    <name type="primary">sde2</name>
    <name type="ORF">TEgg019d03.1</name>
</gene>
<sequence length="468" mass="50788">MASVWVRDALSSRLQLVRVAPGAAALDLLSQAGTAIPLTDFYITCNGHLADLEEKLQDGRTYSIVPRLCGGKGGFGSMLRALGAQIEKTTNREACRDLSGRRLRDVNHEKAMAEWIKKQADREAEKEQRRLERLQRKLAEPKHYFTDPEYHKQCHDMSERLEEAVIKGLQASSSSMASAESDDTRKRKKDMYSSKGTPGKKKCFWTGLEGLETSSSSDSASDSDLDESPCSSSSSSSDSKYYENIKERLQSPESQSSPEELGQGSSDGSHQMLEGHSSSDRSHQMLEGQASCSGSDQMLEGPSSSAGAQWQSSSKGTELVQESQSIPVESEQNMESQNSSDESKQTAFNNSGINVECENVTSPGSTGQDGQTPNDGVRPASPSIPISKQELQQPSNAETSPIDLLAFKTAAELEALGLEKLKLELGALALKCGGTLQERAARLFSVRGLPRDQIDPSLFAKPAKGKKK</sequence>
<organism>
    <name type="scientific">Xenopus tropicalis</name>
    <name type="common">Western clawed frog</name>
    <name type="synonym">Silurana tropicalis</name>
    <dbReference type="NCBI Taxonomy" id="8364"/>
    <lineage>
        <taxon>Eukaryota</taxon>
        <taxon>Metazoa</taxon>
        <taxon>Chordata</taxon>
        <taxon>Craniata</taxon>
        <taxon>Vertebrata</taxon>
        <taxon>Euteleostomi</taxon>
        <taxon>Amphibia</taxon>
        <taxon>Batrachia</taxon>
        <taxon>Anura</taxon>
        <taxon>Pipoidea</taxon>
        <taxon>Pipidae</taxon>
        <taxon>Xenopodinae</taxon>
        <taxon>Xenopus</taxon>
        <taxon>Silurana</taxon>
    </lineage>
</organism>
<comment type="function">
    <text evidence="2">Inhibits translesion DNA synthesis by preventing monoubiquitination of PCNA, this is necessary to counteract damage due to ultraviolet light-induced replication stress (By similarity). SDE2 is cleaved following PCNA binding, and its complete degradation is necessary to allow S-phase progression following DNA damage (By similarity).</text>
</comment>
<comment type="function">
    <text evidence="1 2">Plays a role in pre-mRNA splicing by facilitating excision of relatively short introns featuring weak 3'-splice sites (ss) and high GC content (By similarity). May recruit CACTIN to the spliceosome (By similarity).</text>
</comment>
<comment type="function">
    <text evidence="2">Plays a role in ribosome biogenesis by enabling SNORD3- and SNORD118-dependent cleavage of the 47S rRNA precursor (By similarity). Binds ncRNA (non-coding RNA) including the snoRNAs SNORD3 and SNORD118 (By similarity).</text>
</comment>
<comment type="subcellular location">
    <subcellularLocation>
        <location evidence="2">Nucleus</location>
    </subcellularLocation>
    <subcellularLocation>
        <location evidence="2">Cytoplasm</location>
    </subcellularLocation>
</comment>
<comment type="domain">
    <text evidence="2">The PIP-box (PCNA interacting peptide) motif mediates both the interaction with PCNA and cleavage of the SDE2 precursor by a deubiquitinating enzyme.</text>
</comment>
<comment type="domain">
    <text evidence="2">The SAP domain is necessary for specific binding to DNA.</text>
</comment>
<comment type="domain">
    <text evidence="2">The propeptide displays a ubiquitin-like fold.</text>
</comment>
<comment type="PTM">
    <text evidence="2">Upon binding to PCNA, the N-terminal UBL (ubiquitin-like) propeptide is cleaved at Gly-71 by an unidentified deubiquitinating enzyme; the resulting mature SDE2 is degraded by the DCX(DTL) complex in a cell cycle- and DNA damage dependent manner.</text>
</comment>
<comment type="similarity">
    <text evidence="5">Belongs to the SDE2 family.</text>
</comment>
<proteinExistence type="evidence at transcript level"/>
<evidence type="ECO:0000250" key="1">
    <source>
        <dbReference type="UniProtKB" id="O14113"/>
    </source>
</evidence>
<evidence type="ECO:0000250" key="2">
    <source>
        <dbReference type="UniProtKB" id="Q6IQ49"/>
    </source>
</evidence>
<evidence type="ECO:0000255" key="3"/>
<evidence type="ECO:0000256" key="4">
    <source>
        <dbReference type="SAM" id="MobiDB-lite"/>
    </source>
</evidence>
<evidence type="ECO:0000305" key="5"/>
<keyword id="KW-0131">Cell cycle</keyword>
<keyword id="KW-0132">Cell division</keyword>
<keyword id="KW-0175">Coiled coil</keyword>
<keyword id="KW-0963">Cytoplasm</keyword>
<keyword id="KW-0235">DNA replication</keyword>
<keyword id="KW-0238">DNA-binding</keyword>
<keyword id="KW-0498">Mitosis</keyword>
<keyword id="KW-0507">mRNA processing</keyword>
<keyword id="KW-0508">mRNA splicing</keyword>
<keyword id="KW-0539">Nucleus</keyword>
<keyword id="KW-1185">Reference proteome</keyword>
<keyword id="KW-0690">Ribosome biogenesis</keyword>
<keyword id="KW-0694">RNA-binding</keyword>
<dbReference type="EMBL" id="CR762124">
    <property type="protein sequence ID" value="CAL49366.1"/>
    <property type="molecule type" value="mRNA"/>
</dbReference>
<dbReference type="RefSeq" id="NP_001120528.1">
    <property type="nucleotide sequence ID" value="NM_001127056.1"/>
</dbReference>
<dbReference type="SMR" id="Q07G43"/>
<dbReference type="FunCoup" id="Q07G43">
    <property type="interactions" value="4104"/>
</dbReference>
<dbReference type="STRING" id="8364.ENSXETP00000019775"/>
<dbReference type="PaxDb" id="8364-ENSXETP00000049016"/>
<dbReference type="GeneID" id="100145674"/>
<dbReference type="KEGG" id="xtr:100145674"/>
<dbReference type="AGR" id="Xenbase:XB-GENE-5807809"/>
<dbReference type="CTD" id="163859"/>
<dbReference type="Xenbase" id="XB-GENE-5807809">
    <property type="gene designation" value="sde2"/>
</dbReference>
<dbReference type="eggNOG" id="KOG2827">
    <property type="taxonomic scope" value="Eukaryota"/>
</dbReference>
<dbReference type="InParanoid" id="Q07G43"/>
<dbReference type="OMA" id="CFWTGLE"/>
<dbReference type="OrthoDB" id="547031at2759"/>
<dbReference type="Proteomes" id="UP000008143">
    <property type="component" value="Chromosome 5"/>
</dbReference>
<dbReference type="GO" id="GO:0005737">
    <property type="term" value="C:cytoplasm"/>
    <property type="evidence" value="ECO:0000250"/>
    <property type="project" value="UniProtKB"/>
</dbReference>
<dbReference type="GO" id="GO:0005634">
    <property type="term" value="C:nucleus"/>
    <property type="evidence" value="ECO:0000250"/>
    <property type="project" value="UniProtKB"/>
</dbReference>
<dbReference type="GO" id="GO:0003677">
    <property type="term" value="F:DNA binding"/>
    <property type="evidence" value="ECO:0007669"/>
    <property type="project" value="UniProtKB-KW"/>
</dbReference>
<dbReference type="GO" id="GO:0030515">
    <property type="term" value="F:snoRNA binding"/>
    <property type="evidence" value="ECO:0000250"/>
    <property type="project" value="UniProtKB"/>
</dbReference>
<dbReference type="GO" id="GO:0051301">
    <property type="term" value="P:cell division"/>
    <property type="evidence" value="ECO:0007669"/>
    <property type="project" value="UniProtKB-KW"/>
</dbReference>
<dbReference type="GO" id="GO:0006260">
    <property type="term" value="P:DNA replication"/>
    <property type="evidence" value="ECO:0007669"/>
    <property type="project" value="UniProtKB-KW"/>
</dbReference>
<dbReference type="GO" id="GO:0000479">
    <property type="term" value="P:endonucleolytic cleavage of tricistronic rRNA transcript (SSU-rRNA, 5.8S rRNA, LSU-rRNA)"/>
    <property type="evidence" value="ECO:0000250"/>
    <property type="project" value="UniProtKB"/>
</dbReference>
<dbReference type="GO" id="GO:0045292">
    <property type="term" value="P:mRNA cis splicing, via spliceosome"/>
    <property type="evidence" value="ECO:0000250"/>
    <property type="project" value="UniProtKB"/>
</dbReference>
<dbReference type="InterPro" id="IPR051421">
    <property type="entry name" value="RNA_Proc_DNA_Dmg_Regulator"/>
</dbReference>
<dbReference type="InterPro" id="IPR053822">
    <property type="entry name" value="SDE2-like_dom"/>
</dbReference>
<dbReference type="InterPro" id="IPR025086">
    <property type="entry name" value="SDE2/SF3A3_SAP"/>
</dbReference>
<dbReference type="InterPro" id="IPR053821">
    <property type="entry name" value="Sde2_Ubi"/>
</dbReference>
<dbReference type="PANTHER" id="PTHR12786">
    <property type="entry name" value="SPLICING FACTOR SF3A-RELATED"/>
    <property type="match status" value="1"/>
</dbReference>
<dbReference type="PANTHER" id="PTHR12786:SF1">
    <property type="entry name" value="SPLICING REGULATOR SDE2"/>
    <property type="match status" value="1"/>
</dbReference>
<dbReference type="Pfam" id="PF22782">
    <property type="entry name" value="SDE2"/>
    <property type="match status" value="1"/>
</dbReference>
<dbReference type="Pfam" id="PF13297">
    <property type="entry name" value="SDE2_2C"/>
    <property type="match status" value="1"/>
</dbReference>
<dbReference type="Pfam" id="PF22781">
    <property type="entry name" value="Sde2_N_Ubi_vert"/>
    <property type="match status" value="1"/>
</dbReference>
<accession>Q07G43</accession>
<name>SDE2_XENTR</name>
<protein>
    <recommendedName>
        <fullName evidence="5">Splicing regulator SDE2</fullName>
    </recommendedName>
    <alternativeName>
        <fullName evidence="5">Replication stress response regulator SDE2</fullName>
    </alternativeName>
</protein>